<evidence type="ECO:0000255" key="1">
    <source>
        <dbReference type="HAMAP-Rule" id="MF_00161"/>
    </source>
</evidence>
<accession>B8CSC0</accession>
<name>LSPA_SHEPW</name>
<comment type="function">
    <text evidence="1">This protein specifically catalyzes the removal of signal peptides from prolipoproteins.</text>
</comment>
<comment type="catalytic activity">
    <reaction evidence="1">
        <text>Release of signal peptides from bacterial membrane prolipoproteins. Hydrolyzes -Xaa-Yaa-Zaa-|-(S,diacylglyceryl)Cys-, in which Xaa is hydrophobic (preferably Leu), and Yaa (Ala or Ser) and Zaa (Gly or Ala) have small, neutral side chains.</text>
        <dbReference type="EC" id="3.4.23.36"/>
    </reaction>
</comment>
<comment type="pathway">
    <text evidence="1">Protein modification; lipoprotein biosynthesis (signal peptide cleavage).</text>
</comment>
<comment type="subcellular location">
    <subcellularLocation>
        <location evidence="1">Cell inner membrane</location>
        <topology evidence="1">Multi-pass membrane protein</topology>
    </subcellularLocation>
</comment>
<comment type="similarity">
    <text evidence="1">Belongs to the peptidase A8 family.</text>
</comment>
<reference key="1">
    <citation type="journal article" date="2008" name="PLoS ONE">
        <title>Environmental adaptation: genomic analysis of the piezotolerant and psychrotolerant deep-sea iron reducing bacterium Shewanella piezotolerans WP3.</title>
        <authorList>
            <person name="Wang F."/>
            <person name="Wang J."/>
            <person name="Jian H."/>
            <person name="Zhang B."/>
            <person name="Li S."/>
            <person name="Wang F."/>
            <person name="Zeng X."/>
            <person name="Gao L."/>
            <person name="Bartlett D.H."/>
            <person name="Yu J."/>
            <person name="Hu S."/>
            <person name="Xiao X."/>
        </authorList>
    </citation>
    <scope>NUCLEOTIDE SEQUENCE [LARGE SCALE GENOMIC DNA]</scope>
    <source>
        <strain>WP3 / JCM 13877</strain>
    </source>
</reference>
<sequence length="170" mass="19502">MPTSWKDSGLRWYWIVVLVFIADQLSKQWVLSSFELYESVKLLPMFNFTYVRNYGAAFSFLSDAGGWQRWLFTFVAVGFSILLSVWLRQQSTKMWRLNLAYTLVIGGALGNLIDRLQHGFVVDFLDFYWKTSHFPAFNIADSAICIGAGLIILDSFVSGKDVKKSDDIKE</sequence>
<gene>
    <name evidence="1" type="primary">lspA</name>
    <name type="ordered locus">swp_3727</name>
</gene>
<keyword id="KW-0064">Aspartyl protease</keyword>
<keyword id="KW-0997">Cell inner membrane</keyword>
<keyword id="KW-1003">Cell membrane</keyword>
<keyword id="KW-0378">Hydrolase</keyword>
<keyword id="KW-0472">Membrane</keyword>
<keyword id="KW-0645">Protease</keyword>
<keyword id="KW-0812">Transmembrane</keyword>
<keyword id="KW-1133">Transmembrane helix</keyword>
<dbReference type="EC" id="3.4.23.36" evidence="1"/>
<dbReference type="EMBL" id="CP000472">
    <property type="protein sequence ID" value="ACJ30410.1"/>
    <property type="molecule type" value="Genomic_DNA"/>
</dbReference>
<dbReference type="RefSeq" id="WP_020913754.1">
    <property type="nucleotide sequence ID" value="NC_011566.1"/>
</dbReference>
<dbReference type="SMR" id="B8CSC0"/>
<dbReference type="STRING" id="225849.swp_3727"/>
<dbReference type="MEROPS" id="A08.001"/>
<dbReference type="KEGG" id="swp:swp_3727"/>
<dbReference type="eggNOG" id="COG0597">
    <property type="taxonomic scope" value="Bacteria"/>
</dbReference>
<dbReference type="HOGENOM" id="CLU_083252_4_0_6"/>
<dbReference type="OrthoDB" id="9810259at2"/>
<dbReference type="UniPathway" id="UPA00665"/>
<dbReference type="Proteomes" id="UP000000753">
    <property type="component" value="Chromosome"/>
</dbReference>
<dbReference type="GO" id="GO:0005886">
    <property type="term" value="C:plasma membrane"/>
    <property type="evidence" value="ECO:0007669"/>
    <property type="project" value="UniProtKB-SubCell"/>
</dbReference>
<dbReference type="GO" id="GO:0004190">
    <property type="term" value="F:aspartic-type endopeptidase activity"/>
    <property type="evidence" value="ECO:0007669"/>
    <property type="project" value="UniProtKB-UniRule"/>
</dbReference>
<dbReference type="GO" id="GO:0006508">
    <property type="term" value="P:proteolysis"/>
    <property type="evidence" value="ECO:0007669"/>
    <property type="project" value="UniProtKB-KW"/>
</dbReference>
<dbReference type="HAMAP" id="MF_00161">
    <property type="entry name" value="LspA"/>
    <property type="match status" value="1"/>
</dbReference>
<dbReference type="InterPro" id="IPR001872">
    <property type="entry name" value="Peptidase_A8"/>
</dbReference>
<dbReference type="NCBIfam" id="TIGR00077">
    <property type="entry name" value="lspA"/>
    <property type="match status" value="1"/>
</dbReference>
<dbReference type="PANTHER" id="PTHR33695">
    <property type="entry name" value="LIPOPROTEIN SIGNAL PEPTIDASE"/>
    <property type="match status" value="1"/>
</dbReference>
<dbReference type="PANTHER" id="PTHR33695:SF1">
    <property type="entry name" value="LIPOPROTEIN SIGNAL PEPTIDASE"/>
    <property type="match status" value="1"/>
</dbReference>
<dbReference type="Pfam" id="PF01252">
    <property type="entry name" value="Peptidase_A8"/>
    <property type="match status" value="1"/>
</dbReference>
<dbReference type="PRINTS" id="PR00781">
    <property type="entry name" value="LIPOSIGPTASE"/>
</dbReference>
<dbReference type="PROSITE" id="PS00855">
    <property type="entry name" value="SPASE_II"/>
    <property type="match status" value="1"/>
</dbReference>
<proteinExistence type="inferred from homology"/>
<feature type="chain" id="PRO_1000190805" description="Lipoprotein signal peptidase">
    <location>
        <begin position="1"/>
        <end position="170"/>
    </location>
</feature>
<feature type="transmembrane region" description="Helical" evidence="1">
    <location>
        <begin position="12"/>
        <end position="32"/>
    </location>
</feature>
<feature type="transmembrane region" description="Helical" evidence="1">
    <location>
        <begin position="67"/>
        <end position="87"/>
    </location>
</feature>
<feature type="transmembrane region" description="Helical" evidence="1">
    <location>
        <begin position="94"/>
        <end position="113"/>
    </location>
</feature>
<feature type="transmembrane region" description="Helical" evidence="1">
    <location>
        <begin position="133"/>
        <end position="153"/>
    </location>
</feature>
<feature type="active site" evidence="1">
    <location>
        <position position="123"/>
    </location>
</feature>
<feature type="active site" evidence="1">
    <location>
        <position position="141"/>
    </location>
</feature>
<protein>
    <recommendedName>
        <fullName evidence="1">Lipoprotein signal peptidase</fullName>
        <ecNumber evidence="1">3.4.23.36</ecNumber>
    </recommendedName>
    <alternativeName>
        <fullName evidence="1">Prolipoprotein signal peptidase</fullName>
    </alternativeName>
    <alternativeName>
        <fullName evidence="1">Signal peptidase II</fullName>
        <shortName evidence="1">SPase II</shortName>
    </alternativeName>
</protein>
<organism>
    <name type="scientific">Shewanella piezotolerans (strain WP3 / JCM 13877)</name>
    <dbReference type="NCBI Taxonomy" id="225849"/>
    <lineage>
        <taxon>Bacteria</taxon>
        <taxon>Pseudomonadati</taxon>
        <taxon>Pseudomonadota</taxon>
        <taxon>Gammaproteobacteria</taxon>
        <taxon>Alteromonadales</taxon>
        <taxon>Shewanellaceae</taxon>
        <taxon>Shewanella</taxon>
    </lineage>
</organism>